<evidence type="ECO:0000250" key="1"/>
<evidence type="ECO:0000255" key="2">
    <source>
        <dbReference type="HAMAP-Rule" id="MF_00403"/>
    </source>
</evidence>
<evidence type="ECO:0000305" key="3"/>
<accession>B7UK52</accession>
<comment type="function">
    <text evidence="2">With S4 and S5 plays an important role in translational accuracy.</text>
</comment>
<comment type="function">
    <text evidence="2">Interacts with and stabilizes bases of the 16S rRNA that are involved in tRNA selection in the A site and with the mRNA backbone. Located at the interface of the 30S and 50S subunits, it traverses the body of the 30S subunit contacting proteins on the other side and probably holding the rRNA structure together. The combined cluster of proteins S8, S12 and S17 appears to hold together the shoulder and platform of the 30S subunit.</text>
</comment>
<comment type="subunit">
    <text evidence="2">Part of the 30S ribosomal subunit. Contacts proteins S8 and S17. May interact with IF1 in the 30S initiation complex.</text>
</comment>
<comment type="similarity">
    <text evidence="2">Belongs to the universal ribosomal protein uS12 family.</text>
</comment>
<reference key="1">
    <citation type="journal article" date="2009" name="J. Bacteriol.">
        <title>Complete genome sequence and comparative genome analysis of enteropathogenic Escherichia coli O127:H6 strain E2348/69.</title>
        <authorList>
            <person name="Iguchi A."/>
            <person name="Thomson N.R."/>
            <person name="Ogura Y."/>
            <person name="Saunders D."/>
            <person name="Ooka T."/>
            <person name="Henderson I.R."/>
            <person name="Harris D."/>
            <person name="Asadulghani M."/>
            <person name="Kurokawa K."/>
            <person name="Dean P."/>
            <person name="Kenny B."/>
            <person name="Quail M.A."/>
            <person name="Thurston S."/>
            <person name="Dougan G."/>
            <person name="Hayashi T."/>
            <person name="Parkhill J."/>
            <person name="Frankel G."/>
        </authorList>
    </citation>
    <scope>NUCLEOTIDE SEQUENCE [LARGE SCALE GENOMIC DNA]</scope>
    <source>
        <strain>E2348/69 / EPEC</strain>
    </source>
</reference>
<gene>
    <name evidence="2" type="primary">rpsL</name>
    <name type="ordered locus">E2348C_3591</name>
</gene>
<name>RS12_ECO27</name>
<keyword id="KW-0007">Acetylation</keyword>
<keyword id="KW-0488">Methylation</keyword>
<keyword id="KW-1185">Reference proteome</keyword>
<keyword id="KW-0687">Ribonucleoprotein</keyword>
<keyword id="KW-0689">Ribosomal protein</keyword>
<keyword id="KW-0694">RNA-binding</keyword>
<keyword id="KW-0699">rRNA-binding</keyword>
<keyword id="KW-0820">tRNA-binding</keyword>
<proteinExistence type="inferred from homology"/>
<feature type="chain" id="PRO_1000134633" description="Small ribosomal subunit protein uS12">
    <location>
        <begin position="1"/>
        <end position="124"/>
    </location>
</feature>
<feature type="modified residue" description="3-methylthioaspartic acid" evidence="1">
    <location>
        <position position="89"/>
    </location>
</feature>
<feature type="modified residue" description="N6-acetyllysine" evidence="2">
    <location>
        <position position="108"/>
    </location>
</feature>
<organism>
    <name type="scientific">Escherichia coli O127:H6 (strain E2348/69 / EPEC)</name>
    <dbReference type="NCBI Taxonomy" id="574521"/>
    <lineage>
        <taxon>Bacteria</taxon>
        <taxon>Pseudomonadati</taxon>
        <taxon>Pseudomonadota</taxon>
        <taxon>Gammaproteobacteria</taxon>
        <taxon>Enterobacterales</taxon>
        <taxon>Enterobacteriaceae</taxon>
        <taxon>Escherichia</taxon>
    </lineage>
</organism>
<protein>
    <recommendedName>
        <fullName evidence="2">Small ribosomal subunit protein uS12</fullName>
    </recommendedName>
    <alternativeName>
        <fullName evidence="3">30S ribosomal protein S12</fullName>
    </alternativeName>
</protein>
<sequence>MATVNQLVRKPRARKVAKSNVPALEACPQKRGVCTRVYTTTPKKPNSALRKVCRVRLTNGFEVTSYIGGEGHNLQEHSVILIRGGRVKDLPGVRYHTVRGALDCSGVKDRKQARSKYGVKRPKA</sequence>
<dbReference type="EMBL" id="FM180568">
    <property type="protein sequence ID" value="CAS11139.1"/>
    <property type="molecule type" value="Genomic_DNA"/>
</dbReference>
<dbReference type="RefSeq" id="WP_000246815.1">
    <property type="nucleotide sequence ID" value="NC_011601.1"/>
</dbReference>
<dbReference type="SMR" id="B7UK52"/>
<dbReference type="GeneID" id="98390450"/>
<dbReference type="KEGG" id="ecg:E2348C_3591"/>
<dbReference type="HOGENOM" id="CLU_104295_1_2_6"/>
<dbReference type="Proteomes" id="UP000008205">
    <property type="component" value="Chromosome"/>
</dbReference>
<dbReference type="GO" id="GO:0015935">
    <property type="term" value="C:small ribosomal subunit"/>
    <property type="evidence" value="ECO:0007669"/>
    <property type="project" value="InterPro"/>
</dbReference>
<dbReference type="GO" id="GO:0019843">
    <property type="term" value="F:rRNA binding"/>
    <property type="evidence" value="ECO:0007669"/>
    <property type="project" value="UniProtKB-UniRule"/>
</dbReference>
<dbReference type="GO" id="GO:0003735">
    <property type="term" value="F:structural constituent of ribosome"/>
    <property type="evidence" value="ECO:0007669"/>
    <property type="project" value="InterPro"/>
</dbReference>
<dbReference type="GO" id="GO:0000049">
    <property type="term" value="F:tRNA binding"/>
    <property type="evidence" value="ECO:0007669"/>
    <property type="project" value="UniProtKB-UniRule"/>
</dbReference>
<dbReference type="GO" id="GO:0006412">
    <property type="term" value="P:translation"/>
    <property type="evidence" value="ECO:0007669"/>
    <property type="project" value="UniProtKB-UniRule"/>
</dbReference>
<dbReference type="CDD" id="cd03368">
    <property type="entry name" value="Ribosomal_S12"/>
    <property type="match status" value="1"/>
</dbReference>
<dbReference type="FunFam" id="2.40.50.140:FF:000001">
    <property type="entry name" value="30S ribosomal protein S12"/>
    <property type="match status" value="1"/>
</dbReference>
<dbReference type="Gene3D" id="2.40.50.140">
    <property type="entry name" value="Nucleic acid-binding proteins"/>
    <property type="match status" value="1"/>
</dbReference>
<dbReference type="HAMAP" id="MF_00403_B">
    <property type="entry name" value="Ribosomal_uS12_B"/>
    <property type="match status" value="1"/>
</dbReference>
<dbReference type="InterPro" id="IPR012340">
    <property type="entry name" value="NA-bd_OB-fold"/>
</dbReference>
<dbReference type="InterPro" id="IPR006032">
    <property type="entry name" value="Ribosomal_uS12"/>
</dbReference>
<dbReference type="InterPro" id="IPR005679">
    <property type="entry name" value="Ribosomal_uS12_bac"/>
</dbReference>
<dbReference type="NCBIfam" id="TIGR00981">
    <property type="entry name" value="rpsL_bact"/>
    <property type="match status" value="1"/>
</dbReference>
<dbReference type="PANTHER" id="PTHR11652">
    <property type="entry name" value="30S RIBOSOMAL PROTEIN S12 FAMILY MEMBER"/>
    <property type="match status" value="1"/>
</dbReference>
<dbReference type="Pfam" id="PF00164">
    <property type="entry name" value="Ribosom_S12_S23"/>
    <property type="match status" value="1"/>
</dbReference>
<dbReference type="PIRSF" id="PIRSF002133">
    <property type="entry name" value="Ribosomal_S12/S23"/>
    <property type="match status" value="1"/>
</dbReference>
<dbReference type="PRINTS" id="PR01034">
    <property type="entry name" value="RIBOSOMALS12"/>
</dbReference>
<dbReference type="SUPFAM" id="SSF50249">
    <property type="entry name" value="Nucleic acid-binding proteins"/>
    <property type="match status" value="1"/>
</dbReference>
<dbReference type="PROSITE" id="PS00055">
    <property type="entry name" value="RIBOSOMAL_S12"/>
    <property type="match status" value="1"/>
</dbReference>